<dbReference type="EC" id="3.5.2.9" evidence="1"/>
<dbReference type="EMBL" id="AE016853">
    <property type="protein sequence ID" value="AAO56429.1"/>
    <property type="molecule type" value="Genomic_DNA"/>
</dbReference>
<dbReference type="RefSeq" id="NP_792734.1">
    <property type="nucleotide sequence ID" value="NC_004578.1"/>
</dbReference>
<dbReference type="RefSeq" id="WP_011104283.1">
    <property type="nucleotide sequence ID" value="NC_004578.1"/>
</dbReference>
<dbReference type="SMR" id="Q881F7"/>
<dbReference type="STRING" id="223283.PSPTO_2936"/>
<dbReference type="GeneID" id="1184590"/>
<dbReference type="KEGG" id="pst:PSPTO_2936"/>
<dbReference type="PATRIC" id="fig|223283.9.peg.2994"/>
<dbReference type="eggNOG" id="COG1540">
    <property type="taxonomic scope" value="Bacteria"/>
</dbReference>
<dbReference type="HOGENOM" id="CLU_069535_0_0_6"/>
<dbReference type="OrthoDB" id="9773478at2"/>
<dbReference type="PhylomeDB" id="Q881F7"/>
<dbReference type="Proteomes" id="UP000002515">
    <property type="component" value="Chromosome"/>
</dbReference>
<dbReference type="GO" id="GO:0017168">
    <property type="term" value="F:5-oxoprolinase (ATP-hydrolyzing) activity"/>
    <property type="evidence" value="ECO:0007669"/>
    <property type="project" value="UniProtKB-UniRule"/>
</dbReference>
<dbReference type="GO" id="GO:0005524">
    <property type="term" value="F:ATP binding"/>
    <property type="evidence" value="ECO:0007669"/>
    <property type="project" value="UniProtKB-UniRule"/>
</dbReference>
<dbReference type="GO" id="GO:0005975">
    <property type="term" value="P:carbohydrate metabolic process"/>
    <property type="evidence" value="ECO:0007669"/>
    <property type="project" value="InterPro"/>
</dbReference>
<dbReference type="Gene3D" id="3.20.20.370">
    <property type="entry name" value="Glycoside hydrolase/deacetylase"/>
    <property type="match status" value="1"/>
</dbReference>
<dbReference type="HAMAP" id="MF_00691">
    <property type="entry name" value="PxpA"/>
    <property type="match status" value="1"/>
</dbReference>
<dbReference type="InterPro" id="IPR011330">
    <property type="entry name" value="Glyco_hydro/deAcase_b/a-brl"/>
</dbReference>
<dbReference type="InterPro" id="IPR005501">
    <property type="entry name" value="LamB/YcsF/PxpA-like"/>
</dbReference>
<dbReference type="NCBIfam" id="NF003814">
    <property type="entry name" value="PRK05406.1-3"/>
    <property type="match status" value="1"/>
</dbReference>
<dbReference type="NCBIfam" id="NF003816">
    <property type="entry name" value="PRK05406.1-5"/>
    <property type="match status" value="1"/>
</dbReference>
<dbReference type="PANTHER" id="PTHR30292:SF0">
    <property type="entry name" value="5-OXOPROLINASE SUBUNIT A"/>
    <property type="match status" value="1"/>
</dbReference>
<dbReference type="PANTHER" id="PTHR30292">
    <property type="entry name" value="UNCHARACTERIZED PROTEIN YBGL-RELATED"/>
    <property type="match status" value="1"/>
</dbReference>
<dbReference type="Pfam" id="PF03746">
    <property type="entry name" value="LamB_YcsF"/>
    <property type="match status" value="1"/>
</dbReference>
<dbReference type="SUPFAM" id="SSF88713">
    <property type="entry name" value="Glycoside hydrolase/deacetylase"/>
    <property type="match status" value="1"/>
</dbReference>
<comment type="function">
    <text evidence="1">Catalyzes the cleavage of 5-oxoproline to form L-glutamate coupled to the hydrolysis of ATP to ADP and inorganic phosphate.</text>
</comment>
<comment type="catalytic activity">
    <reaction evidence="1">
        <text>5-oxo-L-proline + ATP + 2 H2O = L-glutamate + ADP + phosphate + H(+)</text>
        <dbReference type="Rhea" id="RHEA:10348"/>
        <dbReference type="ChEBI" id="CHEBI:15377"/>
        <dbReference type="ChEBI" id="CHEBI:15378"/>
        <dbReference type="ChEBI" id="CHEBI:29985"/>
        <dbReference type="ChEBI" id="CHEBI:30616"/>
        <dbReference type="ChEBI" id="CHEBI:43474"/>
        <dbReference type="ChEBI" id="CHEBI:58402"/>
        <dbReference type="ChEBI" id="CHEBI:456216"/>
        <dbReference type="EC" id="3.5.2.9"/>
    </reaction>
</comment>
<comment type="subunit">
    <text evidence="1">Forms a complex composed of PxpA, PxpB and PxpC.</text>
</comment>
<comment type="similarity">
    <text evidence="1">Belongs to the LamB/PxpA family.</text>
</comment>
<feature type="chain" id="PRO_0000185032" description="5-oxoprolinase subunit A 2">
    <location>
        <begin position="1"/>
        <end position="251"/>
    </location>
</feature>
<sequence length="251" mass="27420">MQIDFNSDMGESFGAWTIGDGVDTELMAFISSANIATGFHAGDPSTMRRTIEQAKRLGVAIGAHPGFRDLVGFGRRHINAPAQELVDDMLYQLGALRELARVQGVPLQHFKPHGALYMHLARDEEAARLLVENLQRLEPDLLLYCMPGSVICNVAQELGQPVVREFYADRAYDLSGSIVFTRNVRAHDPAEVAARVIRACQQGLVRTVEGDDLAIQFDSICLHSDTPGALALAQATRQALDGAGIEVRTPR</sequence>
<name>PXPA2_PSESM</name>
<gene>
    <name evidence="1" type="primary">pxpA2</name>
    <name type="ordered locus">PSPTO_2936</name>
</gene>
<reference key="1">
    <citation type="journal article" date="2003" name="Proc. Natl. Acad. Sci. U.S.A.">
        <title>The complete genome sequence of the Arabidopsis and tomato pathogen Pseudomonas syringae pv. tomato DC3000.</title>
        <authorList>
            <person name="Buell C.R."/>
            <person name="Joardar V."/>
            <person name="Lindeberg M."/>
            <person name="Selengut J."/>
            <person name="Paulsen I.T."/>
            <person name="Gwinn M.L."/>
            <person name="Dodson R.J."/>
            <person name="DeBoy R.T."/>
            <person name="Durkin A.S."/>
            <person name="Kolonay J.F."/>
            <person name="Madupu R."/>
            <person name="Daugherty S.C."/>
            <person name="Brinkac L.M."/>
            <person name="Beanan M.J."/>
            <person name="Haft D.H."/>
            <person name="Nelson W.C."/>
            <person name="Davidsen T.M."/>
            <person name="Zafar N."/>
            <person name="Zhou L."/>
            <person name="Liu J."/>
            <person name="Yuan Q."/>
            <person name="Khouri H.M."/>
            <person name="Fedorova N.B."/>
            <person name="Tran B."/>
            <person name="Russell D."/>
            <person name="Berry K.J."/>
            <person name="Utterback T.R."/>
            <person name="Van Aken S.E."/>
            <person name="Feldblyum T.V."/>
            <person name="D'Ascenzo M."/>
            <person name="Deng W.-L."/>
            <person name="Ramos A.R."/>
            <person name="Alfano J.R."/>
            <person name="Cartinhour S."/>
            <person name="Chatterjee A.K."/>
            <person name="Delaney T.P."/>
            <person name="Lazarowitz S.G."/>
            <person name="Martin G.B."/>
            <person name="Schneider D.J."/>
            <person name="Tang X."/>
            <person name="Bender C.L."/>
            <person name="White O."/>
            <person name="Fraser C.M."/>
            <person name="Collmer A."/>
        </authorList>
    </citation>
    <scope>NUCLEOTIDE SEQUENCE [LARGE SCALE GENOMIC DNA]</scope>
    <source>
        <strain>ATCC BAA-871 / DC3000</strain>
    </source>
</reference>
<organism>
    <name type="scientific">Pseudomonas syringae pv. tomato (strain ATCC BAA-871 / DC3000)</name>
    <dbReference type="NCBI Taxonomy" id="223283"/>
    <lineage>
        <taxon>Bacteria</taxon>
        <taxon>Pseudomonadati</taxon>
        <taxon>Pseudomonadota</taxon>
        <taxon>Gammaproteobacteria</taxon>
        <taxon>Pseudomonadales</taxon>
        <taxon>Pseudomonadaceae</taxon>
        <taxon>Pseudomonas</taxon>
    </lineage>
</organism>
<accession>Q881F7</accession>
<proteinExistence type="inferred from homology"/>
<protein>
    <recommendedName>
        <fullName evidence="1">5-oxoprolinase subunit A 2</fullName>
        <shortName evidence="1">5-OPase subunit A 2</shortName>
        <ecNumber evidence="1">3.5.2.9</ecNumber>
    </recommendedName>
    <alternativeName>
        <fullName evidence="1">5-oxoprolinase (ATP-hydrolyzing) subunit A 2</fullName>
    </alternativeName>
</protein>
<keyword id="KW-0067">ATP-binding</keyword>
<keyword id="KW-0378">Hydrolase</keyword>
<keyword id="KW-0547">Nucleotide-binding</keyword>
<keyword id="KW-1185">Reference proteome</keyword>
<evidence type="ECO:0000255" key="1">
    <source>
        <dbReference type="HAMAP-Rule" id="MF_00691"/>
    </source>
</evidence>